<keyword id="KW-1185">Reference proteome</keyword>
<organism>
    <name type="scientific">Escherichia coli (strain K12)</name>
    <dbReference type="NCBI Taxonomy" id="83333"/>
    <lineage>
        <taxon>Bacteria</taxon>
        <taxon>Pseudomonadati</taxon>
        <taxon>Pseudomonadota</taxon>
        <taxon>Gammaproteobacteria</taxon>
        <taxon>Enterobacterales</taxon>
        <taxon>Enterobacteriaceae</taxon>
        <taxon>Escherichia</taxon>
    </lineage>
</organism>
<name>YNAL_ECOLI</name>
<protein>
    <recommendedName>
        <fullName evidence="3">Protein YnaL</fullName>
    </recommendedName>
</protein>
<sequence length="57" mass="6428">MTTLIYLQIPVPEPIPGDPVPVPDPIPRPQPMPDPPPDEEPIKLSHRERRSARIRAC</sequence>
<evidence type="ECO:0000256" key="1">
    <source>
        <dbReference type="SAM" id="MobiDB-lite"/>
    </source>
</evidence>
<evidence type="ECO:0000269" key="2">
    <source>
    </source>
</evidence>
<evidence type="ECO:0000303" key="3">
    <source>
    </source>
</evidence>
<comment type="induction">
    <text evidence="2">Expressed during stationary phase (at protein level).</text>
</comment>
<gene>
    <name evidence="3" type="primary">ynaL</name>
    <name type="ordered locus">b4743</name>
</gene>
<accession>P0DPO3</accession>
<accession>A0A385XJF9</accession>
<proteinExistence type="evidence at protein level"/>
<dbReference type="EMBL" id="U00096">
    <property type="protein sequence ID" value="AYC08203.1"/>
    <property type="molecule type" value="Genomic_DNA"/>
</dbReference>
<dbReference type="RefSeq" id="WP_001296046.1">
    <property type="nucleotide sequence ID" value="NZ_STEB01000005.1"/>
</dbReference>
<dbReference type="EnsemblBacteria" id="AYC08203">
    <property type="protein sequence ID" value="AYC08203"/>
    <property type="gene ID" value="b4743"/>
</dbReference>
<dbReference type="GeneID" id="93779486"/>
<dbReference type="KEGG" id="ecoc:C3026_07865"/>
<dbReference type="InParanoid" id="P0DPO3"/>
<dbReference type="BioCyc" id="EcoCyc:MONOMER0-4420"/>
<dbReference type="PRO" id="PR:P0DPO3"/>
<dbReference type="Proteomes" id="UP000000625">
    <property type="component" value="Chromosome"/>
</dbReference>
<dbReference type="InterPro" id="IPR056956">
    <property type="entry name" value="YnaL-like"/>
</dbReference>
<dbReference type="Pfam" id="PF23677">
    <property type="entry name" value="YnaL"/>
    <property type="match status" value="1"/>
</dbReference>
<feature type="chain" id="PRO_0000445171" description="Protein YnaL">
    <location>
        <begin position="1"/>
        <end position="57"/>
    </location>
</feature>
<feature type="region of interest" description="Disordered" evidence="1">
    <location>
        <begin position="7"/>
        <end position="57"/>
    </location>
</feature>
<feature type="compositionally biased region" description="Pro residues" evidence="1">
    <location>
        <begin position="11"/>
        <end position="35"/>
    </location>
</feature>
<feature type="compositionally biased region" description="Basic residues" evidence="1">
    <location>
        <begin position="46"/>
        <end position="57"/>
    </location>
</feature>
<reference key="1">
    <citation type="journal article" date="1997" name="Science">
        <title>The complete genome sequence of Escherichia coli K-12.</title>
        <authorList>
            <person name="Blattner F.R."/>
            <person name="Plunkett G. III"/>
            <person name="Bloch C.A."/>
            <person name="Perna N.T."/>
            <person name="Burland V."/>
            <person name="Riley M."/>
            <person name="Collado-Vides J."/>
            <person name="Glasner J.D."/>
            <person name="Rode C.K."/>
            <person name="Mayhew G.F."/>
            <person name="Gregor J."/>
            <person name="Davis N.W."/>
            <person name="Kirkpatrick H.A."/>
            <person name="Goeden M.A."/>
            <person name="Rose D.J."/>
            <person name="Mau B."/>
            <person name="Shao Y."/>
        </authorList>
    </citation>
    <scope>NUCLEOTIDE SEQUENCE [LARGE SCALE GENOMIC DNA]</scope>
    <source>
        <strain>K12 / MG1655 / ATCC 47076</strain>
    </source>
</reference>
<reference key="2">
    <citation type="journal article" date="2018" name="Proteomics">
        <title>Identifying new small proteins in Escherichia coli.</title>
        <authorList>
            <person name="VanOrsdel C.E."/>
            <person name="Kelly J.P."/>
            <person name="Burke B.N."/>
            <person name="Lein C.D."/>
            <person name="Oufiero C.E."/>
            <person name="Sanchez J.F."/>
            <person name="Wimmers L.E."/>
            <person name="Hearn D.J."/>
            <person name="Abuikhdair F.J."/>
            <person name="Barnhart K.R."/>
            <person name="Duley M.L."/>
            <person name="Ernst S.E.G."/>
            <person name="Kenerson B.A."/>
            <person name="Serafin A.J."/>
            <person name="Hemm M.R."/>
        </authorList>
    </citation>
    <scope>IDENTIFICATION</scope>
    <scope>INDUCTION</scope>
</reference>